<comment type="function">
    <text evidence="5">Aspartyl protease. Not able to cleave BAG6.</text>
</comment>
<comment type="subcellular location">
    <subcellularLocation>
        <location evidence="1">Cell membrane</location>
        <topology evidence="1">Lipid-anchor</topology>
        <topology evidence="1">GPI-anchor</topology>
    </subcellularLocation>
</comment>
<comment type="similarity">
    <text evidence="6">Belongs to the peptidase A1 family.</text>
</comment>
<evidence type="ECO:0000255" key="1"/>
<evidence type="ECO:0000255" key="2">
    <source>
        <dbReference type="PROSITE-ProRule" id="PRU01103"/>
    </source>
</evidence>
<evidence type="ECO:0000255" key="3">
    <source>
        <dbReference type="PROSITE-ProRule" id="PRU10094"/>
    </source>
</evidence>
<evidence type="ECO:0000256" key="4">
    <source>
        <dbReference type="SAM" id="MobiDB-lite"/>
    </source>
</evidence>
<evidence type="ECO:0000269" key="5">
    <source>
    </source>
</evidence>
<evidence type="ECO:0000305" key="6"/>
<evidence type="ECO:0000312" key="7">
    <source>
        <dbReference type="Araport" id="AT2G17760"/>
    </source>
</evidence>
<proteinExistence type="evidence at transcript level"/>
<organism>
    <name type="scientific">Arabidopsis thaliana</name>
    <name type="common">Mouse-ear cress</name>
    <dbReference type="NCBI Taxonomy" id="3702"/>
    <lineage>
        <taxon>Eukaryota</taxon>
        <taxon>Viridiplantae</taxon>
        <taxon>Streptophyta</taxon>
        <taxon>Embryophyta</taxon>
        <taxon>Tracheophyta</taxon>
        <taxon>Spermatophyta</taxon>
        <taxon>Magnoliopsida</taxon>
        <taxon>eudicotyledons</taxon>
        <taxon>Gunneridae</taxon>
        <taxon>Pentapetalae</taxon>
        <taxon>rosids</taxon>
        <taxon>malvids</taxon>
        <taxon>Brassicales</taxon>
        <taxon>Brassicaceae</taxon>
        <taxon>Camelineae</taxon>
        <taxon>Arabidopsis</taxon>
    </lineage>
</organism>
<name>APF1_ARATH</name>
<keyword id="KW-0064">Aspartyl protease</keyword>
<keyword id="KW-1003">Cell membrane</keyword>
<keyword id="KW-0325">Glycoprotein</keyword>
<keyword id="KW-0336">GPI-anchor</keyword>
<keyword id="KW-0378">Hydrolase</keyword>
<keyword id="KW-0449">Lipoprotein</keyword>
<keyword id="KW-0472">Membrane</keyword>
<keyword id="KW-0645">Protease</keyword>
<keyword id="KW-1185">Reference proteome</keyword>
<keyword id="KW-0732">Signal</keyword>
<protein>
    <recommendedName>
        <fullName evidence="6">Aspartyl protease family protein 1</fullName>
        <ecNumber evidence="6">3.4.23.-</ecNumber>
    </recommendedName>
</protein>
<feature type="signal peptide" evidence="1">
    <location>
        <begin position="1"/>
        <end position="21"/>
    </location>
</feature>
<feature type="chain" id="PRO_5005941369" description="Aspartyl protease family protein 1" evidence="1">
    <location>
        <begin position="22"/>
        <end position="484"/>
    </location>
</feature>
<feature type="propeptide" id="PRO_0000436002" description="Removed in mature form" evidence="1">
    <location>
        <begin position="485"/>
        <end position="513"/>
    </location>
</feature>
<feature type="domain" description="Peptidase A1" evidence="2">
    <location>
        <begin position="104"/>
        <end position="445"/>
    </location>
</feature>
<feature type="region of interest" description="Disordered" evidence="4">
    <location>
        <begin position="452"/>
        <end position="488"/>
    </location>
</feature>
<feature type="compositionally biased region" description="Low complexity" evidence="4">
    <location>
        <begin position="455"/>
        <end position="474"/>
    </location>
</feature>
<feature type="active site" evidence="3">
    <location>
        <position position="122"/>
    </location>
</feature>
<feature type="active site" evidence="3">
    <location>
        <position position="327"/>
    </location>
</feature>
<feature type="lipid moiety-binding region" description="GPI-anchor amidated serine" evidence="1">
    <location>
        <position position="484"/>
    </location>
</feature>
<gene>
    <name evidence="6" type="primary">APF1</name>
    <name evidence="7" type="ordered locus">At2g17760</name>
    <name evidence="6" type="ORF">T17A5.8</name>
</gene>
<reference key="1">
    <citation type="journal article" date="1999" name="Nature">
        <title>Sequence and analysis of chromosome 2 of the plant Arabidopsis thaliana.</title>
        <authorList>
            <person name="Lin X."/>
            <person name="Kaul S."/>
            <person name="Rounsley S.D."/>
            <person name="Shea T.P."/>
            <person name="Benito M.-I."/>
            <person name="Town C.D."/>
            <person name="Fujii C.Y."/>
            <person name="Mason T.M."/>
            <person name="Bowman C.L."/>
            <person name="Barnstead M.E."/>
            <person name="Feldblyum T.V."/>
            <person name="Buell C.R."/>
            <person name="Ketchum K.A."/>
            <person name="Lee J.J."/>
            <person name="Ronning C.M."/>
            <person name="Koo H.L."/>
            <person name="Moffat K.S."/>
            <person name="Cronin L.A."/>
            <person name="Shen M."/>
            <person name="Pai G."/>
            <person name="Van Aken S."/>
            <person name="Umayam L."/>
            <person name="Tallon L.J."/>
            <person name="Gill J.E."/>
            <person name="Adams M.D."/>
            <person name="Carrera A.J."/>
            <person name="Creasy T.H."/>
            <person name="Goodman H.M."/>
            <person name="Somerville C.R."/>
            <person name="Copenhaver G.P."/>
            <person name="Preuss D."/>
            <person name="Nierman W.C."/>
            <person name="White O."/>
            <person name="Eisen J.A."/>
            <person name="Salzberg S.L."/>
            <person name="Fraser C.M."/>
            <person name="Venter J.C."/>
        </authorList>
    </citation>
    <scope>NUCLEOTIDE SEQUENCE [LARGE SCALE GENOMIC DNA]</scope>
    <source>
        <strain>cv. Columbia</strain>
    </source>
</reference>
<reference key="2">
    <citation type="journal article" date="2017" name="Plant J.">
        <title>Araport11: a complete reannotation of the Arabidopsis thaliana reference genome.</title>
        <authorList>
            <person name="Cheng C.Y."/>
            <person name="Krishnakumar V."/>
            <person name="Chan A.P."/>
            <person name="Thibaud-Nissen F."/>
            <person name="Schobel S."/>
            <person name="Town C.D."/>
        </authorList>
    </citation>
    <scope>GENOME REANNOTATION</scope>
    <source>
        <strain>cv. Columbia</strain>
    </source>
</reference>
<reference key="3">
    <citation type="journal article" date="2003" name="Science">
        <title>Empirical analysis of transcriptional activity in the Arabidopsis genome.</title>
        <authorList>
            <person name="Yamada K."/>
            <person name="Lim J."/>
            <person name="Dale J.M."/>
            <person name="Chen H."/>
            <person name="Shinn P."/>
            <person name="Palm C.J."/>
            <person name="Southwick A.M."/>
            <person name="Wu H.C."/>
            <person name="Kim C.J."/>
            <person name="Nguyen M."/>
            <person name="Pham P.K."/>
            <person name="Cheuk R.F."/>
            <person name="Karlin-Newmann G."/>
            <person name="Liu S.X."/>
            <person name="Lam B."/>
            <person name="Sakano H."/>
            <person name="Wu T."/>
            <person name="Yu G."/>
            <person name="Miranda M."/>
            <person name="Quach H.L."/>
            <person name="Tripp M."/>
            <person name="Chang C.H."/>
            <person name="Lee J.M."/>
            <person name="Toriumi M.J."/>
            <person name="Chan M.M."/>
            <person name="Tang C.C."/>
            <person name="Onodera C.S."/>
            <person name="Deng J.M."/>
            <person name="Akiyama K."/>
            <person name="Ansari Y."/>
            <person name="Arakawa T."/>
            <person name="Banh J."/>
            <person name="Banno F."/>
            <person name="Bowser L."/>
            <person name="Brooks S.Y."/>
            <person name="Carninci P."/>
            <person name="Chao Q."/>
            <person name="Choy N."/>
            <person name="Enju A."/>
            <person name="Goldsmith A.D."/>
            <person name="Gurjal M."/>
            <person name="Hansen N.F."/>
            <person name="Hayashizaki Y."/>
            <person name="Johnson-Hopson C."/>
            <person name="Hsuan V.W."/>
            <person name="Iida K."/>
            <person name="Karnes M."/>
            <person name="Khan S."/>
            <person name="Koesema E."/>
            <person name="Ishida J."/>
            <person name="Jiang P.X."/>
            <person name="Jones T."/>
            <person name="Kawai J."/>
            <person name="Kamiya A."/>
            <person name="Meyers C."/>
            <person name="Nakajima M."/>
            <person name="Narusaka M."/>
            <person name="Seki M."/>
            <person name="Sakurai T."/>
            <person name="Satou M."/>
            <person name="Tamse R."/>
            <person name="Vaysberg M."/>
            <person name="Wallender E.K."/>
            <person name="Wong C."/>
            <person name="Yamamura Y."/>
            <person name="Yuan S."/>
            <person name="Shinozaki K."/>
            <person name="Davis R.W."/>
            <person name="Theologis A."/>
            <person name="Ecker J.R."/>
        </authorList>
    </citation>
    <scope>NUCLEOTIDE SEQUENCE [LARGE SCALE MRNA]</scope>
    <source>
        <strain>cv. Columbia</strain>
    </source>
</reference>
<reference key="4">
    <citation type="journal article" date="2005" name="Curr. Protein Pept. Sci.">
        <title>Aspartic proteinase content of the Arabidopsis genome.</title>
        <authorList>
            <person name="Faro C."/>
            <person name="Gal S."/>
        </authorList>
    </citation>
    <scope>GENE FAMILY</scope>
</reference>
<reference key="5">
    <citation type="journal article" date="2016" name="Plant Cell">
        <title>Aspartyl protease-mediated cleavage of BAG6 is necessary for autophagy and fungal resistance in plants.</title>
        <authorList>
            <person name="Li Y."/>
            <person name="Kabbage M."/>
            <person name="Liu W."/>
            <person name="Dickman M.B."/>
        </authorList>
    </citation>
    <scope>FUNCTION</scope>
</reference>
<accession>Q8VYV9</accession>
<dbReference type="EC" id="3.4.23.-" evidence="6"/>
<dbReference type="EMBL" id="CP002685">
    <property type="protein sequence ID" value="AEC06679.1"/>
    <property type="molecule type" value="Genomic_DNA"/>
</dbReference>
<dbReference type="EMBL" id="AY069886">
    <property type="protein sequence ID" value="AAL47439.1"/>
    <property type="molecule type" value="mRNA"/>
</dbReference>
<dbReference type="EMBL" id="AY142012">
    <property type="protein sequence ID" value="AAM98276.1"/>
    <property type="molecule type" value="mRNA"/>
</dbReference>
<dbReference type="PIR" id="T08860">
    <property type="entry name" value="T08860"/>
</dbReference>
<dbReference type="RefSeq" id="NP_849967.1">
    <property type="nucleotide sequence ID" value="NM_179636.3"/>
</dbReference>
<dbReference type="SMR" id="Q8VYV9"/>
<dbReference type="FunCoup" id="Q8VYV9">
    <property type="interactions" value="486"/>
</dbReference>
<dbReference type="IntAct" id="Q8VYV9">
    <property type="interactions" value="1"/>
</dbReference>
<dbReference type="STRING" id="3702.Q8VYV9"/>
<dbReference type="MEROPS" id="A01.A38"/>
<dbReference type="GlyGen" id="Q8VYV9">
    <property type="glycosylation" value="1 site"/>
</dbReference>
<dbReference type="iPTMnet" id="Q8VYV9"/>
<dbReference type="PaxDb" id="3702-AT2G17760.1"/>
<dbReference type="ProteomicsDB" id="244437"/>
<dbReference type="EnsemblPlants" id="AT2G17760.1">
    <property type="protein sequence ID" value="AT2G17760.1"/>
    <property type="gene ID" value="AT2G17760"/>
</dbReference>
<dbReference type="GeneID" id="816285"/>
<dbReference type="Gramene" id="AT2G17760.1">
    <property type="protein sequence ID" value="AT2G17760.1"/>
    <property type="gene ID" value="AT2G17760"/>
</dbReference>
<dbReference type="KEGG" id="ath:AT2G17760"/>
<dbReference type="Araport" id="AT2G17760"/>
<dbReference type="TAIR" id="AT2G17760"/>
<dbReference type="eggNOG" id="KOG1339">
    <property type="taxonomic scope" value="Eukaryota"/>
</dbReference>
<dbReference type="HOGENOM" id="CLU_029667_2_0_1"/>
<dbReference type="InParanoid" id="Q8VYV9"/>
<dbReference type="OMA" id="YCYDISP"/>
<dbReference type="PhylomeDB" id="Q8VYV9"/>
<dbReference type="PRO" id="PR:Q8VYV9"/>
<dbReference type="Proteomes" id="UP000006548">
    <property type="component" value="Chromosome 2"/>
</dbReference>
<dbReference type="ExpressionAtlas" id="Q8VYV9">
    <property type="expression patterns" value="baseline and differential"/>
</dbReference>
<dbReference type="GO" id="GO:0005886">
    <property type="term" value="C:plasma membrane"/>
    <property type="evidence" value="ECO:0007669"/>
    <property type="project" value="UniProtKB-SubCell"/>
</dbReference>
<dbReference type="GO" id="GO:0098552">
    <property type="term" value="C:side of membrane"/>
    <property type="evidence" value="ECO:0007669"/>
    <property type="project" value="UniProtKB-KW"/>
</dbReference>
<dbReference type="GO" id="GO:0004190">
    <property type="term" value="F:aspartic-type endopeptidase activity"/>
    <property type="evidence" value="ECO:0007669"/>
    <property type="project" value="UniProtKB-KW"/>
</dbReference>
<dbReference type="GO" id="GO:0006508">
    <property type="term" value="P:proteolysis"/>
    <property type="evidence" value="ECO:0007669"/>
    <property type="project" value="UniProtKB-KW"/>
</dbReference>
<dbReference type="FunFam" id="2.40.70.10:FF:000012">
    <property type="entry name" value="Aspartyl protease family protein 1"/>
    <property type="match status" value="1"/>
</dbReference>
<dbReference type="FunFam" id="2.40.70.10:FF:000014">
    <property type="entry name" value="Aspartyl protease family protein 1"/>
    <property type="match status" value="1"/>
</dbReference>
<dbReference type="Gene3D" id="2.40.70.10">
    <property type="entry name" value="Acid Proteases"/>
    <property type="match status" value="2"/>
</dbReference>
<dbReference type="InterPro" id="IPR001461">
    <property type="entry name" value="Aspartic_peptidase_A1"/>
</dbReference>
<dbReference type="InterPro" id="IPR001969">
    <property type="entry name" value="Aspartic_peptidase_AS"/>
</dbReference>
<dbReference type="InterPro" id="IPR033121">
    <property type="entry name" value="PEPTIDASE_A1"/>
</dbReference>
<dbReference type="InterPro" id="IPR021109">
    <property type="entry name" value="Peptidase_aspartic_dom_sf"/>
</dbReference>
<dbReference type="InterPro" id="IPR032799">
    <property type="entry name" value="TAXi_C"/>
</dbReference>
<dbReference type="InterPro" id="IPR032861">
    <property type="entry name" value="TAXi_N"/>
</dbReference>
<dbReference type="PANTHER" id="PTHR13683:SF826">
    <property type="entry name" value="ASPARTYL PROTEASE FAMILY PROTEIN 1"/>
    <property type="match status" value="1"/>
</dbReference>
<dbReference type="PANTHER" id="PTHR13683">
    <property type="entry name" value="ASPARTYL PROTEASES"/>
    <property type="match status" value="1"/>
</dbReference>
<dbReference type="Pfam" id="PF14541">
    <property type="entry name" value="TAXi_C"/>
    <property type="match status" value="1"/>
</dbReference>
<dbReference type="Pfam" id="PF14543">
    <property type="entry name" value="TAXi_N"/>
    <property type="match status" value="1"/>
</dbReference>
<dbReference type="PRINTS" id="PR00792">
    <property type="entry name" value="PEPSIN"/>
</dbReference>
<dbReference type="SUPFAM" id="SSF50630">
    <property type="entry name" value="Acid proteases"/>
    <property type="match status" value="1"/>
</dbReference>
<dbReference type="PROSITE" id="PS00141">
    <property type="entry name" value="ASP_PROTEASE"/>
    <property type="match status" value="2"/>
</dbReference>
<dbReference type="PROSITE" id="PS51767">
    <property type="entry name" value="PEPTIDASE_A1"/>
    <property type="match status" value="1"/>
</dbReference>
<sequence length="513" mass="56028">MVWYSSCRILFLGLLILLASSWVLDRCEGFGEFGFEFHHRFSDQVVGVLPGDGLPNRDSSKYYRVMAHRDRLIRGRRLANEDQSLVTFSDGNETVRVDALGFLHYANVTVGTPSDWFMVALDTGSDLFWLPCDCTNCVRELKAPGGSSLDLNIYSPNASSTSTKVPCNSTLCTRGDRCASPESDCPYQIRYLSNGTSSTGVLVEDVLHLVSNDKSSKAIPARVTFGCGQVQTGVFHDGAAPNGLFGLGLEDISVPSVLAKEGIAANSFSMCFGNDGAGRISFGDKGSVDQRETPLNIRQPHPTYNITVTKISVGGNTGDLEFDAVFDSGTSFTYLTDAAYTLISESFNSLALDKRYQTTDSELPFEYCYALSPNKDSFQYPAVNLTMKGGSSYPVYHPLVVIPMKDTDVYCLAIMKIEDISIIGQNFMTGYRVVFDREKLILGWKESDCYTGETSARTLPSNRSSSSARPPASSFDPEATNIPSQRPNTSTTSAAYSLSISLSLFFFSILAIL</sequence>